<comment type="function">
    <text>Putative transcription factor that coordinates gene expression underlying the differentiation of the pedicel abscission zone. May also be involved in the maintenance of the inflorescence meristem state.</text>
</comment>
<comment type="subcellular location">
    <subcellularLocation>
        <location evidence="4">Nucleus</location>
    </subcellularLocation>
</comment>
<comment type="tissue specificity">
    <text>Widely expressed with highest levels in shoot tips and axillary buds. Also found in fully developed pedicels and flowers.</text>
</comment>
<comment type="biotechnology">
    <text>Mutation in 'JOINTLESS' yields 'stemless' tomato fruits which are widely used in the processing tomato industry. The fruits support mechanical harvesting and are not subject to physical wounding during transportation.</text>
</comment>
<keyword id="KW-0217">Developmental protein</keyword>
<keyword id="KW-0238">DNA-binding</keyword>
<keyword id="KW-0539">Nucleus</keyword>
<keyword id="KW-1185">Reference proteome</keyword>
<keyword id="KW-0804">Transcription</keyword>
<keyword id="KW-0805">Transcription regulation</keyword>
<proteinExistence type="evidence at protein level"/>
<sequence length="265" mass="30426">MAREKIQIKKIDNSTARQVTFSKRRRGLFKKAEELSVLCDADVALIIFSSTGKLFDYSSSSMKQILERRDLHSKNLEKLDQPSLELQLVENSNYSRLSKEISEKSHRLRQMRGEELQGLNIEELQQLERSLETGLSRVIERKGDKIMREINQLQQKGMHLMEENEKLRQQVMEISNNNNNNNNGYREAGVVIFEPENGFNNNNNEDGQSSESVTNPCNSIDPPPQDDDSSDTSLKLGLATLLRLKRSKARCGYFCMLLEEGEKKK</sequence>
<dbReference type="EMBL" id="AF275345">
    <property type="protein sequence ID" value="AAG09811.1"/>
    <property type="molecule type" value="Genomic_DNA"/>
</dbReference>
<dbReference type="SMR" id="Q9FUY6"/>
<dbReference type="FunCoup" id="Q9FUY6">
    <property type="interactions" value="93"/>
</dbReference>
<dbReference type="STRING" id="4081.Q9FUY6"/>
<dbReference type="PaxDb" id="4081-Solyc11g010570.1.1"/>
<dbReference type="EnsemblPlants" id="Solyc11g010570.2.1">
    <property type="protein sequence ID" value="Solyc11g010570.2.1"/>
    <property type="gene ID" value="Solyc11g010570.2"/>
</dbReference>
<dbReference type="Gramene" id="Solyc11g010570.2.1">
    <property type="protein sequence ID" value="Solyc11g010570.2.1"/>
    <property type="gene ID" value="Solyc11g010570.2"/>
</dbReference>
<dbReference type="eggNOG" id="KOG0014">
    <property type="taxonomic scope" value="Eukaryota"/>
</dbReference>
<dbReference type="HOGENOM" id="CLU_053053_14_1_1"/>
<dbReference type="InParanoid" id="Q9FUY6"/>
<dbReference type="OMA" id="QIYNNVH"/>
<dbReference type="PhylomeDB" id="Q9FUY6"/>
<dbReference type="Proteomes" id="UP000004994">
    <property type="component" value="Chromosome 11"/>
</dbReference>
<dbReference type="GO" id="GO:0005634">
    <property type="term" value="C:nucleus"/>
    <property type="evidence" value="ECO:0007669"/>
    <property type="project" value="UniProtKB-SubCell"/>
</dbReference>
<dbReference type="GO" id="GO:0000981">
    <property type="term" value="F:DNA-binding transcription factor activity, RNA polymerase II-specific"/>
    <property type="evidence" value="ECO:0000318"/>
    <property type="project" value="GO_Central"/>
</dbReference>
<dbReference type="GO" id="GO:0000900">
    <property type="term" value="F:mRNA regulatory element binding translation repressor activity"/>
    <property type="evidence" value="ECO:0007669"/>
    <property type="project" value="EnsemblPlants"/>
</dbReference>
<dbReference type="GO" id="GO:0046983">
    <property type="term" value="F:protein dimerization activity"/>
    <property type="evidence" value="ECO:0007669"/>
    <property type="project" value="InterPro"/>
</dbReference>
<dbReference type="GO" id="GO:0000978">
    <property type="term" value="F:RNA polymerase II cis-regulatory region sequence-specific DNA binding"/>
    <property type="evidence" value="ECO:0000318"/>
    <property type="project" value="GO_Central"/>
</dbReference>
<dbReference type="GO" id="GO:0045892">
    <property type="term" value="P:negative regulation of DNA-templated transcription"/>
    <property type="evidence" value="ECO:0007669"/>
    <property type="project" value="EnsemblPlants"/>
</dbReference>
<dbReference type="GO" id="GO:0009910">
    <property type="term" value="P:negative regulation of flower development"/>
    <property type="evidence" value="ECO:0007669"/>
    <property type="project" value="EnsemblPlants"/>
</dbReference>
<dbReference type="GO" id="GO:0045944">
    <property type="term" value="P:positive regulation of transcription by RNA polymerase II"/>
    <property type="evidence" value="ECO:0007669"/>
    <property type="project" value="InterPro"/>
</dbReference>
<dbReference type="GO" id="GO:0006357">
    <property type="term" value="P:regulation of transcription by RNA polymerase II"/>
    <property type="evidence" value="ECO:0000318"/>
    <property type="project" value="GO_Central"/>
</dbReference>
<dbReference type="GO" id="GO:0009266">
    <property type="term" value="P:response to temperature stimulus"/>
    <property type="evidence" value="ECO:0007669"/>
    <property type="project" value="EnsemblPlants"/>
</dbReference>
<dbReference type="CDD" id="cd00265">
    <property type="entry name" value="MADS_MEF2_like"/>
    <property type="match status" value="1"/>
</dbReference>
<dbReference type="FunFam" id="3.40.1810.10:FF:000007">
    <property type="entry name" value="Transcription factor, MADS-box"/>
    <property type="match status" value="1"/>
</dbReference>
<dbReference type="Gene3D" id="3.40.1810.10">
    <property type="entry name" value="Transcription factor, MADS-box"/>
    <property type="match status" value="1"/>
</dbReference>
<dbReference type="InterPro" id="IPR050142">
    <property type="entry name" value="MADS-box/MEF2_TF"/>
</dbReference>
<dbReference type="InterPro" id="IPR033896">
    <property type="entry name" value="MEF2-like_N"/>
</dbReference>
<dbReference type="InterPro" id="IPR002487">
    <property type="entry name" value="TF_Kbox"/>
</dbReference>
<dbReference type="InterPro" id="IPR002100">
    <property type="entry name" value="TF_MADSbox"/>
</dbReference>
<dbReference type="InterPro" id="IPR036879">
    <property type="entry name" value="TF_MADSbox_sf"/>
</dbReference>
<dbReference type="PANTHER" id="PTHR48019">
    <property type="entry name" value="SERUM RESPONSE FACTOR HOMOLOG"/>
    <property type="match status" value="1"/>
</dbReference>
<dbReference type="Pfam" id="PF01486">
    <property type="entry name" value="K-box"/>
    <property type="match status" value="1"/>
</dbReference>
<dbReference type="Pfam" id="PF00319">
    <property type="entry name" value="SRF-TF"/>
    <property type="match status" value="1"/>
</dbReference>
<dbReference type="PRINTS" id="PR00404">
    <property type="entry name" value="MADSDOMAIN"/>
</dbReference>
<dbReference type="SMART" id="SM00432">
    <property type="entry name" value="MADS"/>
    <property type="match status" value="1"/>
</dbReference>
<dbReference type="SUPFAM" id="SSF55455">
    <property type="entry name" value="SRF-like"/>
    <property type="match status" value="1"/>
</dbReference>
<dbReference type="PROSITE" id="PS51297">
    <property type="entry name" value="K_BOX"/>
    <property type="match status" value="1"/>
</dbReference>
<dbReference type="PROSITE" id="PS00350">
    <property type="entry name" value="MADS_BOX_1"/>
    <property type="match status" value="1"/>
</dbReference>
<dbReference type="PROSITE" id="PS50066">
    <property type="entry name" value="MADS_BOX_2"/>
    <property type="match status" value="1"/>
</dbReference>
<organism>
    <name type="scientific">Solanum lycopersicum</name>
    <name type="common">Tomato</name>
    <name type="synonym">Lycopersicon esculentum</name>
    <dbReference type="NCBI Taxonomy" id="4081"/>
    <lineage>
        <taxon>Eukaryota</taxon>
        <taxon>Viridiplantae</taxon>
        <taxon>Streptophyta</taxon>
        <taxon>Embryophyta</taxon>
        <taxon>Tracheophyta</taxon>
        <taxon>Spermatophyta</taxon>
        <taxon>Magnoliopsida</taxon>
        <taxon>eudicotyledons</taxon>
        <taxon>Gunneridae</taxon>
        <taxon>Pentapetalae</taxon>
        <taxon>asterids</taxon>
        <taxon>lamiids</taxon>
        <taxon>Solanales</taxon>
        <taxon>Solanaceae</taxon>
        <taxon>Solanoideae</taxon>
        <taxon>Solaneae</taxon>
        <taxon>Solanum</taxon>
        <taxon>Solanum subgen. Lycopersicon</taxon>
    </lineage>
</organism>
<protein>
    <recommendedName>
        <fullName>MADS-box protein JOINTLESS</fullName>
    </recommendedName>
    <alternativeName>
        <fullName>LeMADS</fullName>
    </alternativeName>
</protein>
<evidence type="ECO:0000255" key="1">
    <source>
        <dbReference type="PROSITE-ProRule" id="PRU00251"/>
    </source>
</evidence>
<evidence type="ECO:0000255" key="2">
    <source>
        <dbReference type="PROSITE-ProRule" id="PRU00629"/>
    </source>
</evidence>
<evidence type="ECO:0000256" key="3">
    <source>
        <dbReference type="SAM" id="MobiDB-lite"/>
    </source>
</evidence>
<evidence type="ECO:0000305" key="4"/>
<feature type="chain" id="PRO_0000199488" description="MADS-box protein JOINTLESS">
    <location>
        <begin position="1"/>
        <end position="265"/>
    </location>
</feature>
<feature type="domain" description="MADS-box" evidence="1">
    <location>
        <begin position="3"/>
        <end position="57"/>
    </location>
</feature>
<feature type="domain" description="K-box" evidence="2">
    <location>
        <begin position="87"/>
        <end position="177"/>
    </location>
</feature>
<feature type="region of interest" description="Disordered" evidence="3">
    <location>
        <begin position="196"/>
        <end position="232"/>
    </location>
</feature>
<feature type="compositionally biased region" description="Polar residues" evidence="3">
    <location>
        <begin position="205"/>
        <end position="218"/>
    </location>
</feature>
<gene>
    <name type="primary">J</name>
</gene>
<name>JOIN_SOLLC</name>
<accession>Q9FUY6</accession>
<reference key="1">
    <citation type="journal article" date="2000" name="Nature">
        <title>JOINTLESS is a MADS-box gene controlling tomato flower abscission zone development.</title>
        <authorList>
            <person name="Mao L."/>
            <person name="Begum D."/>
            <person name="Chuang H.W."/>
            <person name="Budiman M.A."/>
            <person name="Szymkowiak E.J."/>
            <person name="Irish E.E."/>
            <person name="Wing R.A."/>
        </authorList>
    </citation>
    <scope>NUCLEOTIDE SEQUENCE [GENOMIC DNA]</scope>
    <source>
        <strain>cv. Heinz 1706</strain>
    </source>
</reference>